<comment type="function">
    <text evidence="1">IGPS catalyzes the conversion of PRFAR and glutamine to IGP, AICAR and glutamate. The HisF subunit catalyzes the cyclization activity that produces IGP and AICAR from PRFAR using the ammonia provided by the HisH subunit.</text>
</comment>
<comment type="catalytic activity">
    <reaction evidence="1">
        <text>5-[(5-phospho-1-deoxy-D-ribulos-1-ylimino)methylamino]-1-(5-phospho-beta-D-ribosyl)imidazole-4-carboxamide + L-glutamine = D-erythro-1-(imidazol-4-yl)glycerol 3-phosphate + 5-amino-1-(5-phospho-beta-D-ribosyl)imidazole-4-carboxamide + L-glutamate + H(+)</text>
        <dbReference type="Rhea" id="RHEA:24793"/>
        <dbReference type="ChEBI" id="CHEBI:15378"/>
        <dbReference type="ChEBI" id="CHEBI:29985"/>
        <dbReference type="ChEBI" id="CHEBI:58278"/>
        <dbReference type="ChEBI" id="CHEBI:58359"/>
        <dbReference type="ChEBI" id="CHEBI:58475"/>
        <dbReference type="ChEBI" id="CHEBI:58525"/>
        <dbReference type="EC" id="4.3.2.10"/>
    </reaction>
</comment>
<comment type="pathway">
    <text evidence="1">Amino-acid biosynthesis; L-histidine biosynthesis; L-histidine from 5-phospho-alpha-D-ribose 1-diphosphate: step 5/9.</text>
</comment>
<comment type="subunit">
    <text evidence="1">Heterodimer of HisH and HisF.</text>
</comment>
<comment type="subcellular location">
    <subcellularLocation>
        <location evidence="1">Cytoplasm</location>
    </subcellularLocation>
</comment>
<comment type="similarity">
    <text evidence="1">Belongs to the HisA/HisF family.</text>
</comment>
<keyword id="KW-0028">Amino-acid biosynthesis</keyword>
<keyword id="KW-0963">Cytoplasm</keyword>
<keyword id="KW-0368">Histidine biosynthesis</keyword>
<keyword id="KW-0456">Lyase</keyword>
<keyword id="KW-1185">Reference proteome</keyword>
<gene>
    <name evidence="1" type="primary">hisF</name>
    <name type="ordered locus">OCAR_4399</name>
    <name type="ordered locus">OCA5_c01320</name>
</gene>
<sequence length="257" mass="27365">MFKVRVIPCLDVKDGRVVKGVNFVGLRDAGDPVEAAIAYGAAGADELCFLDITATHENRGTILDVVKRTAEACFMPVTVGGGVRTVDDIRTLLNHGADKVSINSAAVSRREFVKEAAEKFGNQCIVVAIDAKRVARSGSDRWEIFTHGGRKETGIDAIEYAQEVVALGAGEILLTSMDRDGTKQGFDIPLTRAIADSITVPVIASGGVGNLDHLVAGIREGHATAVLAASIFHFGEFTVRQAKEHMARAGLPMRLDP</sequence>
<reference key="1">
    <citation type="journal article" date="2008" name="J. Bacteriol.">
        <title>Genome sequence of the chemolithoautotrophic bacterium Oligotropha carboxidovorans OM5T.</title>
        <authorList>
            <person name="Paul D."/>
            <person name="Bridges S."/>
            <person name="Burgess S.C."/>
            <person name="Dandass Y."/>
            <person name="Lawrence M.L."/>
        </authorList>
    </citation>
    <scope>NUCLEOTIDE SEQUENCE [LARGE SCALE GENOMIC DNA]</scope>
    <source>
        <strain>ATCC 49405 / DSM 1227 / KCTC 32145 / OM5</strain>
    </source>
</reference>
<reference key="2">
    <citation type="journal article" date="2011" name="J. Bacteriol.">
        <title>Complete genome sequences of the chemolithoautotrophic Oligotropha carboxidovorans strains OM4 and OM5.</title>
        <authorList>
            <person name="Volland S."/>
            <person name="Rachinger M."/>
            <person name="Strittmatter A."/>
            <person name="Daniel R."/>
            <person name="Gottschalk G."/>
            <person name="Meyer O."/>
        </authorList>
    </citation>
    <scope>NUCLEOTIDE SEQUENCE [LARGE SCALE GENOMIC DNA]</scope>
    <source>
        <strain>ATCC 49405 / DSM 1227 / KCTC 32145 / OM5</strain>
    </source>
</reference>
<name>HIS6_AFIC5</name>
<organism>
    <name type="scientific">Afipia carboxidovorans (strain ATCC 49405 / DSM 1227 / KCTC 32145 / OM5)</name>
    <name type="common">Oligotropha carboxidovorans</name>
    <dbReference type="NCBI Taxonomy" id="504832"/>
    <lineage>
        <taxon>Bacteria</taxon>
        <taxon>Pseudomonadati</taxon>
        <taxon>Pseudomonadota</taxon>
        <taxon>Alphaproteobacteria</taxon>
        <taxon>Hyphomicrobiales</taxon>
        <taxon>Nitrobacteraceae</taxon>
        <taxon>Afipia</taxon>
    </lineage>
</organism>
<protein>
    <recommendedName>
        <fullName evidence="1">Imidazole glycerol phosphate synthase subunit HisF</fullName>
        <ecNumber evidence="1">4.3.2.10</ecNumber>
    </recommendedName>
    <alternativeName>
        <fullName evidence="1">IGP synthase cyclase subunit</fullName>
    </alternativeName>
    <alternativeName>
        <fullName evidence="1">IGP synthase subunit HisF</fullName>
    </alternativeName>
    <alternativeName>
        <fullName evidence="1">ImGP synthase subunit HisF</fullName>
        <shortName evidence="1">IGPS subunit HisF</shortName>
    </alternativeName>
</protein>
<accession>B6JCG5</accession>
<accession>F8BRG0</accession>
<feature type="chain" id="PRO_1000190586" description="Imidazole glycerol phosphate synthase subunit HisF">
    <location>
        <begin position="1"/>
        <end position="257"/>
    </location>
</feature>
<feature type="active site" evidence="1">
    <location>
        <position position="11"/>
    </location>
</feature>
<feature type="active site" evidence="1">
    <location>
        <position position="130"/>
    </location>
</feature>
<proteinExistence type="inferred from homology"/>
<evidence type="ECO:0000255" key="1">
    <source>
        <dbReference type="HAMAP-Rule" id="MF_01013"/>
    </source>
</evidence>
<dbReference type="EC" id="4.3.2.10" evidence="1"/>
<dbReference type="EMBL" id="CP001196">
    <property type="protein sequence ID" value="ACI91545.1"/>
    <property type="molecule type" value="Genomic_DNA"/>
</dbReference>
<dbReference type="EMBL" id="CP002826">
    <property type="protein sequence ID" value="AEI04864.1"/>
    <property type="molecule type" value="Genomic_DNA"/>
</dbReference>
<dbReference type="RefSeq" id="WP_012561576.1">
    <property type="nucleotide sequence ID" value="NC_015684.1"/>
</dbReference>
<dbReference type="SMR" id="B6JCG5"/>
<dbReference type="STRING" id="504832.OCA5_c01320"/>
<dbReference type="KEGG" id="oca:OCAR_4399"/>
<dbReference type="KEGG" id="ocg:OCA5_c01320"/>
<dbReference type="PATRIC" id="fig|504832.7.peg.139"/>
<dbReference type="eggNOG" id="COG0107">
    <property type="taxonomic scope" value="Bacteria"/>
</dbReference>
<dbReference type="HOGENOM" id="CLU_048577_4_0_5"/>
<dbReference type="OrthoDB" id="9781903at2"/>
<dbReference type="UniPathway" id="UPA00031">
    <property type="reaction ID" value="UER00010"/>
</dbReference>
<dbReference type="Proteomes" id="UP000007730">
    <property type="component" value="Chromosome"/>
</dbReference>
<dbReference type="GO" id="GO:0005737">
    <property type="term" value="C:cytoplasm"/>
    <property type="evidence" value="ECO:0007669"/>
    <property type="project" value="UniProtKB-SubCell"/>
</dbReference>
<dbReference type="GO" id="GO:0000107">
    <property type="term" value="F:imidazoleglycerol-phosphate synthase activity"/>
    <property type="evidence" value="ECO:0007669"/>
    <property type="project" value="UniProtKB-UniRule"/>
</dbReference>
<dbReference type="GO" id="GO:0016829">
    <property type="term" value="F:lyase activity"/>
    <property type="evidence" value="ECO:0007669"/>
    <property type="project" value="UniProtKB-KW"/>
</dbReference>
<dbReference type="GO" id="GO:0000105">
    <property type="term" value="P:L-histidine biosynthetic process"/>
    <property type="evidence" value="ECO:0007669"/>
    <property type="project" value="UniProtKB-UniRule"/>
</dbReference>
<dbReference type="CDD" id="cd04731">
    <property type="entry name" value="HisF"/>
    <property type="match status" value="1"/>
</dbReference>
<dbReference type="FunFam" id="3.20.20.70:FF:000006">
    <property type="entry name" value="Imidazole glycerol phosphate synthase subunit HisF"/>
    <property type="match status" value="1"/>
</dbReference>
<dbReference type="Gene3D" id="3.20.20.70">
    <property type="entry name" value="Aldolase class I"/>
    <property type="match status" value="1"/>
</dbReference>
<dbReference type="HAMAP" id="MF_01013">
    <property type="entry name" value="HisF"/>
    <property type="match status" value="1"/>
</dbReference>
<dbReference type="InterPro" id="IPR013785">
    <property type="entry name" value="Aldolase_TIM"/>
</dbReference>
<dbReference type="InterPro" id="IPR006062">
    <property type="entry name" value="His_biosynth"/>
</dbReference>
<dbReference type="InterPro" id="IPR004651">
    <property type="entry name" value="HisF"/>
</dbReference>
<dbReference type="InterPro" id="IPR050064">
    <property type="entry name" value="IGPS_HisA/HisF"/>
</dbReference>
<dbReference type="InterPro" id="IPR011060">
    <property type="entry name" value="RibuloseP-bd_barrel"/>
</dbReference>
<dbReference type="NCBIfam" id="TIGR00735">
    <property type="entry name" value="hisF"/>
    <property type="match status" value="1"/>
</dbReference>
<dbReference type="PANTHER" id="PTHR21235:SF2">
    <property type="entry name" value="IMIDAZOLE GLYCEROL PHOSPHATE SYNTHASE HISHF"/>
    <property type="match status" value="1"/>
</dbReference>
<dbReference type="PANTHER" id="PTHR21235">
    <property type="entry name" value="IMIDAZOLE GLYCEROL PHOSPHATE SYNTHASE SUBUNIT HISF/H IGP SYNTHASE SUBUNIT HISF/H"/>
    <property type="match status" value="1"/>
</dbReference>
<dbReference type="Pfam" id="PF00977">
    <property type="entry name" value="His_biosynth"/>
    <property type="match status" value="1"/>
</dbReference>
<dbReference type="SUPFAM" id="SSF51366">
    <property type="entry name" value="Ribulose-phoshate binding barrel"/>
    <property type="match status" value="1"/>
</dbReference>